<reference key="1">
    <citation type="journal article" date="2001" name="Genomics">
        <title>Comparative genomics of the SOX9 region in human and Fugu rubripes: conservation of short regulatory sequence elements within large intergenic regions.</title>
        <authorList>
            <person name="Bagheri-Fam S."/>
            <person name="Ferraz C."/>
            <person name="Demaille J."/>
            <person name="Scherer G."/>
            <person name="Pfeifer D."/>
        </authorList>
    </citation>
    <scope>NUCLEOTIDE SEQUENCE [MRNA] (ISOFORM 2)</scope>
    <scope>VARIANT ALA-111</scope>
</reference>
<reference key="2">
    <citation type="journal article" date="2004" name="Nat. Genet.">
        <title>Complete sequencing and characterization of 21,243 full-length human cDNAs.</title>
        <authorList>
            <person name="Ota T."/>
            <person name="Suzuki Y."/>
            <person name="Nishikawa T."/>
            <person name="Otsuki T."/>
            <person name="Sugiyama T."/>
            <person name="Irie R."/>
            <person name="Wakamatsu A."/>
            <person name="Hayashi K."/>
            <person name="Sato H."/>
            <person name="Nagai K."/>
            <person name="Kimura K."/>
            <person name="Makita H."/>
            <person name="Sekine M."/>
            <person name="Obayashi M."/>
            <person name="Nishi T."/>
            <person name="Shibahara T."/>
            <person name="Tanaka T."/>
            <person name="Ishii S."/>
            <person name="Yamamoto J."/>
            <person name="Saito K."/>
            <person name="Kawai Y."/>
            <person name="Isono Y."/>
            <person name="Nakamura Y."/>
            <person name="Nagahari K."/>
            <person name="Murakami K."/>
            <person name="Yasuda T."/>
            <person name="Iwayanagi T."/>
            <person name="Wagatsuma M."/>
            <person name="Shiratori A."/>
            <person name="Sudo H."/>
            <person name="Hosoiri T."/>
            <person name="Kaku Y."/>
            <person name="Kodaira H."/>
            <person name="Kondo H."/>
            <person name="Sugawara M."/>
            <person name="Takahashi M."/>
            <person name="Kanda K."/>
            <person name="Yokoi T."/>
            <person name="Furuya T."/>
            <person name="Kikkawa E."/>
            <person name="Omura Y."/>
            <person name="Abe K."/>
            <person name="Kamihara K."/>
            <person name="Katsuta N."/>
            <person name="Sato K."/>
            <person name="Tanikawa M."/>
            <person name="Yamazaki M."/>
            <person name="Ninomiya K."/>
            <person name="Ishibashi T."/>
            <person name="Yamashita H."/>
            <person name="Murakawa K."/>
            <person name="Fujimori K."/>
            <person name="Tanai H."/>
            <person name="Kimata M."/>
            <person name="Watanabe M."/>
            <person name="Hiraoka S."/>
            <person name="Chiba Y."/>
            <person name="Ishida S."/>
            <person name="Ono Y."/>
            <person name="Takiguchi S."/>
            <person name="Watanabe S."/>
            <person name="Yosida M."/>
            <person name="Hotuta T."/>
            <person name="Kusano J."/>
            <person name="Kanehori K."/>
            <person name="Takahashi-Fujii A."/>
            <person name="Hara H."/>
            <person name="Tanase T.-O."/>
            <person name="Nomura Y."/>
            <person name="Togiya S."/>
            <person name="Komai F."/>
            <person name="Hara R."/>
            <person name="Takeuchi K."/>
            <person name="Arita M."/>
            <person name="Imose N."/>
            <person name="Musashino K."/>
            <person name="Yuuki H."/>
            <person name="Oshima A."/>
            <person name="Sasaki N."/>
            <person name="Aotsuka S."/>
            <person name="Yoshikawa Y."/>
            <person name="Matsunawa H."/>
            <person name="Ichihara T."/>
            <person name="Shiohata N."/>
            <person name="Sano S."/>
            <person name="Moriya S."/>
            <person name="Momiyama H."/>
            <person name="Satoh N."/>
            <person name="Takami S."/>
            <person name="Terashima Y."/>
            <person name="Suzuki O."/>
            <person name="Nakagawa S."/>
            <person name="Senoh A."/>
            <person name="Mizoguchi H."/>
            <person name="Goto Y."/>
            <person name="Shimizu F."/>
            <person name="Wakebe H."/>
            <person name="Hishigaki H."/>
            <person name="Watanabe T."/>
            <person name="Sugiyama A."/>
            <person name="Takemoto M."/>
            <person name="Kawakami B."/>
            <person name="Yamazaki M."/>
            <person name="Watanabe K."/>
            <person name="Kumagai A."/>
            <person name="Itakura S."/>
            <person name="Fukuzumi Y."/>
            <person name="Fujimori Y."/>
            <person name="Komiyama M."/>
            <person name="Tashiro H."/>
            <person name="Tanigami A."/>
            <person name="Fujiwara T."/>
            <person name="Ono T."/>
            <person name="Yamada K."/>
            <person name="Fujii Y."/>
            <person name="Ozaki K."/>
            <person name="Hirao M."/>
            <person name="Ohmori Y."/>
            <person name="Kawabata A."/>
            <person name="Hikiji T."/>
            <person name="Kobatake N."/>
            <person name="Inagaki H."/>
            <person name="Ikema Y."/>
            <person name="Okamoto S."/>
            <person name="Okitani R."/>
            <person name="Kawakami T."/>
            <person name="Noguchi S."/>
            <person name="Itoh T."/>
            <person name="Shigeta K."/>
            <person name="Senba T."/>
            <person name="Matsumura K."/>
            <person name="Nakajima Y."/>
            <person name="Mizuno T."/>
            <person name="Morinaga M."/>
            <person name="Sasaki M."/>
            <person name="Togashi T."/>
            <person name="Oyama M."/>
            <person name="Hata H."/>
            <person name="Watanabe M."/>
            <person name="Komatsu T."/>
            <person name="Mizushima-Sugano J."/>
            <person name="Satoh T."/>
            <person name="Shirai Y."/>
            <person name="Takahashi Y."/>
            <person name="Nakagawa K."/>
            <person name="Okumura K."/>
            <person name="Nagase T."/>
            <person name="Nomura N."/>
            <person name="Kikuchi H."/>
            <person name="Masuho Y."/>
            <person name="Yamashita R."/>
            <person name="Nakai K."/>
            <person name="Yada T."/>
            <person name="Nakamura Y."/>
            <person name="Ohara O."/>
            <person name="Isogai T."/>
            <person name="Sugano S."/>
        </authorList>
    </citation>
    <scope>NUCLEOTIDE SEQUENCE [LARGE SCALE MRNA] (ISOFORMS 1 AND 2)</scope>
    <scope>VARIANT ALA-111</scope>
    <source>
        <tissue>Kidney</tissue>
        <tissue>Tongue</tissue>
    </source>
</reference>
<reference key="3">
    <citation type="journal article" date="2006" name="Nature">
        <title>DNA sequence of human chromosome 17 and analysis of rearrangement in the human lineage.</title>
        <authorList>
            <person name="Zody M.C."/>
            <person name="Garber M."/>
            <person name="Adams D.J."/>
            <person name="Sharpe T."/>
            <person name="Harrow J."/>
            <person name="Lupski J.R."/>
            <person name="Nicholson C."/>
            <person name="Searle S.M."/>
            <person name="Wilming L."/>
            <person name="Young S.K."/>
            <person name="Abouelleil A."/>
            <person name="Allen N.R."/>
            <person name="Bi W."/>
            <person name="Bloom T."/>
            <person name="Borowsky M.L."/>
            <person name="Bugalter B.E."/>
            <person name="Butler J."/>
            <person name="Chang J.L."/>
            <person name="Chen C.-K."/>
            <person name="Cook A."/>
            <person name="Corum B."/>
            <person name="Cuomo C.A."/>
            <person name="de Jong P.J."/>
            <person name="DeCaprio D."/>
            <person name="Dewar K."/>
            <person name="FitzGerald M."/>
            <person name="Gilbert J."/>
            <person name="Gibson R."/>
            <person name="Gnerre S."/>
            <person name="Goldstein S."/>
            <person name="Grafham D.V."/>
            <person name="Grocock R."/>
            <person name="Hafez N."/>
            <person name="Hagopian D.S."/>
            <person name="Hart E."/>
            <person name="Norman C.H."/>
            <person name="Humphray S."/>
            <person name="Jaffe D.B."/>
            <person name="Jones M."/>
            <person name="Kamal M."/>
            <person name="Khodiyar V.K."/>
            <person name="LaButti K."/>
            <person name="Laird G."/>
            <person name="Lehoczky J."/>
            <person name="Liu X."/>
            <person name="Lokyitsang T."/>
            <person name="Loveland J."/>
            <person name="Lui A."/>
            <person name="Macdonald P."/>
            <person name="Major J.E."/>
            <person name="Matthews L."/>
            <person name="Mauceli E."/>
            <person name="McCarroll S.A."/>
            <person name="Mihalev A.H."/>
            <person name="Mudge J."/>
            <person name="Nguyen C."/>
            <person name="Nicol R."/>
            <person name="O'Leary S.B."/>
            <person name="Osoegawa K."/>
            <person name="Schwartz D.C."/>
            <person name="Shaw-Smith C."/>
            <person name="Stankiewicz P."/>
            <person name="Steward C."/>
            <person name="Swarbreck D."/>
            <person name="Venkataraman V."/>
            <person name="Whittaker C.A."/>
            <person name="Yang X."/>
            <person name="Zimmer A.R."/>
            <person name="Bradley A."/>
            <person name="Hubbard T."/>
            <person name="Birren B.W."/>
            <person name="Rogers J."/>
            <person name="Lander E.S."/>
            <person name="Nusbaum C."/>
        </authorList>
    </citation>
    <scope>NUCLEOTIDE SEQUENCE [LARGE SCALE GENOMIC DNA]</scope>
</reference>
<reference key="4">
    <citation type="submission" date="2005-07" db="EMBL/GenBank/DDBJ databases">
        <authorList>
            <person name="Mural R.J."/>
            <person name="Istrail S."/>
            <person name="Sutton G.G."/>
            <person name="Florea L."/>
            <person name="Halpern A.L."/>
            <person name="Mobarry C.M."/>
            <person name="Lippert R."/>
            <person name="Walenz B."/>
            <person name="Shatkay H."/>
            <person name="Dew I."/>
            <person name="Miller J.R."/>
            <person name="Flanigan M.J."/>
            <person name="Edwards N.J."/>
            <person name="Bolanos R."/>
            <person name="Fasulo D."/>
            <person name="Halldorsson B.V."/>
            <person name="Hannenhalli S."/>
            <person name="Turner R."/>
            <person name="Yooseph S."/>
            <person name="Lu F."/>
            <person name="Nusskern D.R."/>
            <person name="Shue B.C."/>
            <person name="Zheng X.H."/>
            <person name="Zhong F."/>
            <person name="Delcher A.L."/>
            <person name="Huson D.H."/>
            <person name="Kravitz S.A."/>
            <person name="Mouchard L."/>
            <person name="Reinert K."/>
            <person name="Remington K.A."/>
            <person name="Clark A.G."/>
            <person name="Waterman M.S."/>
            <person name="Eichler E.E."/>
            <person name="Adams M.D."/>
            <person name="Hunkapiller M.W."/>
            <person name="Myers E.W."/>
            <person name="Venter J.C."/>
        </authorList>
    </citation>
    <scope>NUCLEOTIDE SEQUENCE [LARGE SCALE GENOMIC DNA]</scope>
    <scope>VARIANT ALA-111</scope>
</reference>
<reference key="5">
    <citation type="journal article" date="2004" name="Genome Res.">
        <title>The status, quality, and expansion of the NIH full-length cDNA project: the Mammalian Gene Collection (MGC).</title>
        <authorList>
            <consortium name="The MGC Project Team"/>
        </authorList>
    </citation>
    <scope>NUCLEOTIDE SEQUENCE [LARGE SCALE MRNA] (ISOFORM 2)</scope>
    <scope>VARIANT ALA-111</scope>
    <source>
        <tissue>Blood</tissue>
    </source>
</reference>
<dbReference type="EMBL" id="AF331643">
    <property type="protein sequence ID" value="AAL32175.1"/>
    <property type="molecule type" value="mRNA"/>
</dbReference>
<dbReference type="EMBL" id="AK095227">
    <property type="protein sequence ID" value="BAC04504.1"/>
    <property type="molecule type" value="mRNA"/>
</dbReference>
<dbReference type="EMBL" id="AK313376">
    <property type="protein sequence ID" value="BAG36174.1"/>
    <property type="molecule type" value="mRNA"/>
</dbReference>
<dbReference type="EMBL" id="AC011120">
    <property type="status" value="NOT_ANNOTATED_CDS"/>
    <property type="molecule type" value="Genomic_DNA"/>
</dbReference>
<dbReference type="EMBL" id="AC025198">
    <property type="status" value="NOT_ANNOTATED_CDS"/>
    <property type="molecule type" value="Genomic_DNA"/>
</dbReference>
<dbReference type="EMBL" id="AC080037">
    <property type="status" value="NOT_ANNOTATED_CDS"/>
    <property type="molecule type" value="Genomic_DNA"/>
</dbReference>
<dbReference type="EMBL" id="AC138336">
    <property type="status" value="NOT_ANNOTATED_CDS"/>
    <property type="molecule type" value="Genomic_DNA"/>
</dbReference>
<dbReference type="EMBL" id="CH471099">
    <property type="protein sequence ID" value="EAW89107.1"/>
    <property type="molecule type" value="Genomic_DNA"/>
</dbReference>
<dbReference type="EMBL" id="BC035631">
    <property type="protein sequence ID" value="AAH35631.1"/>
    <property type="molecule type" value="mRNA"/>
</dbReference>
<dbReference type="CCDS" id="CCDS11690.1">
    <molecule id="Q8N1S5-2"/>
</dbReference>
<dbReference type="CCDS" id="CCDS54160.1">
    <molecule id="Q8N1S5-1"/>
</dbReference>
<dbReference type="RefSeq" id="NP_001153242.1">
    <molecule id="Q8N1S5-1"/>
    <property type="nucleotide sequence ID" value="NM_001159770.2"/>
</dbReference>
<dbReference type="RefSeq" id="NP_001339620.1">
    <molecule id="Q8N1S5-2"/>
    <property type="nucleotide sequence ID" value="NM_001352691.2"/>
</dbReference>
<dbReference type="RefSeq" id="NP_001339621.1">
    <molecule id="Q8N1S5-1"/>
    <property type="nucleotide sequence ID" value="NM_001352692.2"/>
</dbReference>
<dbReference type="RefSeq" id="NP_001339622.1">
    <molecule id="Q8N1S5-2"/>
    <property type="nucleotide sequence ID" value="NM_001352693.2"/>
</dbReference>
<dbReference type="RefSeq" id="NP_631916.2">
    <molecule id="Q8N1S5-2"/>
    <property type="nucleotide sequence ID" value="NM_139177.4"/>
</dbReference>
<dbReference type="RefSeq" id="XP_005257191.1">
    <property type="nucleotide sequence ID" value="XM_005257134.3"/>
</dbReference>
<dbReference type="RefSeq" id="XP_006721817.1">
    <property type="nucleotide sequence ID" value="XM_006721754.3"/>
</dbReference>
<dbReference type="RefSeq" id="XP_006721818.1">
    <molecule id="Q8N1S5-1"/>
    <property type="nucleotide sequence ID" value="XM_006721755.3"/>
</dbReference>
<dbReference type="RefSeq" id="XP_011522795.1">
    <molecule id="Q8N1S5-1"/>
    <property type="nucleotide sequence ID" value="XM_011524493.2"/>
</dbReference>
<dbReference type="RefSeq" id="XP_011522796.1">
    <molecule id="Q8N1S5-1"/>
    <property type="nucleotide sequence ID" value="XM_011524494.2"/>
</dbReference>
<dbReference type="RefSeq" id="XP_016879819.1">
    <molecule id="Q8N1S5-2"/>
    <property type="nucleotide sequence ID" value="XM_017024330.2"/>
</dbReference>
<dbReference type="RefSeq" id="XP_016879820.1">
    <property type="nucleotide sequence ID" value="XM_017024331.1"/>
</dbReference>
<dbReference type="RefSeq" id="XP_016879821.1">
    <molecule id="Q8N1S5-2"/>
    <property type="nucleotide sequence ID" value="XM_017024332.1"/>
</dbReference>
<dbReference type="SMR" id="Q8N1S5"/>
<dbReference type="BioGRID" id="128379">
    <property type="interactions" value="75"/>
</dbReference>
<dbReference type="FunCoup" id="Q8N1S5">
    <property type="interactions" value="1461"/>
</dbReference>
<dbReference type="IntAct" id="Q8N1S5">
    <property type="interactions" value="50"/>
</dbReference>
<dbReference type="STRING" id="9606.ENSP00000445829"/>
<dbReference type="DrugBank" id="DB14533">
    <property type="generic name" value="Zinc chloride"/>
</dbReference>
<dbReference type="DrugBank" id="DB14548">
    <property type="generic name" value="Zinc sulfate, unspecified form"/>
</dbReference>
<dbReference type="TCDB" id="2.A.5.5.2">
    <property type="family name" value="the zinc (zn(2+))-iron (fe(2+)) permease (zip) family"/>
</dbReference>
<dbReference type="iPTMnet" id="Q8N1S5"/>
<dbReference type="PhosphoSitePlus" id="Q8N1S5"/>
<dbReference type="BioMuta" id="SLC39A11"/>
<dbReference type="DMDM" id="313104189"/>
<dbReference type="jPOST" id="Q8N1S5"/>
<dbReference type="MassIVE" id="Q8N1S5"/>
<dbReference type="PaxDb" id="9606-ENSP00000445829"/>
<dbReference type="PeptideAtlas" id="Q8N1S5"/>
<dbReference type="ProteomicsDB" id="71629">
    <molecule id="Q8N1S5-1"/>
</dbReference>
<dbReference type="ProteomicsDB" id="71630">
    <molecule id="Q8N1S5-2"/>
</dbReference>
<dbReference type="Pumba" id="Q8N1S5"/>
<dbReference type="Antibodypedia" id="31896">
    <property type="antibodies" value="114 antibodies from 26 providers"/>
</dbReference>
<dbReference type="DNASU" id="201266"/>
<dbReference type="Ensembl" id="ENST00000255559.8">
    <molecule id="Q8N1S5-2"/>
    <property type="protein sequence ID" value="ENSP00000255559.3"/>
    <property type="gene ID" value="ENSG00000133195.12"/>
</dbReference>
<dbReference type="Ensembl" id="ENST00000542342.6">
    <molecule id="Q8N1S5-1"/>
    <property type="protein sequence ID" value="ENSP00000445829.2"/>
    <property type="gene ID" value="ENSG00000133195.12"/>
</dbReference>
<dbReference type="GeneID" id="201266"/>
<dbReference type="KEGG" id="hsa:201266"/>
<dbReference type="MANE-Select" id="ENST00000255559.8">
    <molecule id="Q8N1S5-2"/>
    <property type="protein sequence ID" value="ENSP00000255559.3"/>
    <property type="RefSeq nucleotide sequence ID" value="NM_139177.4"/>
    <property type="RefSeq protein sequence ID" value="NP_631916.2"/>
</dbReference>
<dbReference type="UCSC" id="uc002jja.4">
    <molecule id="Q8N1S5-1"/>
    <property type="organism name" value="human"/>
</dbReference>
<dbReference type="AGR" id="HGNC:14463"/>
<dbReference type="CTD" id="201266"/>
<dbReference type="DisGeNET" id="201266"/>
<dbReference type="GeneCards" id="SLC39A11"/>
<dbReference type="HGNC" id="HGNC:14463">
    <property type="gene designation" value="SLC39A11"/>
</dbReference>
<dbReference type="HPA" id="ENSG00000133195">
    <property type="expression patterns" value="Low tissue specificity"/>
</dbReference>
<dbReference type="MIM" id="616508">
    <property type="type" value="gene"/>
</dbReference>
<dbReference type="neXtProt" id="NX_Q8N1S5"/>
<dbReference type="OpenTargets" id="ENSG00000133195"/>
<dbReference type="PharmGKB" id="PA25581"/>
<dbReference type="VEuPathDB" id="HostDB:ENSG00000133195"/>
<dbReference type="eggNOG" id="KOG2474">
    <property type="taxonomic scope" value="Eukaryota"/>
</dbReference>
<dbReference type="GeneTree" id="ENSGT00390000006167"/>
<dbReference type="HOGENOM" id="CLU_015114_1_1_1"/>
<dbReference type="InParanoid" id="Q8N1S5"/>
<dbReference type="OMA" id="MIFVVIE"/>
<dbReference type="OrthoDB" id="262547at2759"/>
<dbReference type="PAN-GO" id="Q8N1S5">
    <property type="GO annotations" value="3 GO annotations based on evolutionary models"/>
</dbReference>
<dbReference type="PhylomeDB" id="Q8N1S5"/>
<dbReference type="TreeFam" id="TF105905"/>
<dbReference type="PathwayCommons" id="Q8N1S5"/>
<dbReference type="SignaLink" id="Q8N1S5"/>
<dbReference type="BioGRID-ORCS" id="201266">
    <property type="hits" value="10 hits in 1153 CRISPR screens"/>
</dbReference>
<dbReference type="ChiTaRS" id="SLC39A11">
    <property type="organism name" value="human"/>
</dbReference>
<dbReference type="GenomeRNAi" id="201266"/>
<dbReference type="Pharos" id="Q8N1S5">
    <property type="development level" value="Tbio"/>
</dbReference>
<dbReference type="PRO" id="PR:Q8N1S5"/>
<dbReference type="Proteomes" id="UP000005640">
    <property type="component" value="Chromosome 17"/>
</dbReference>
<dbReference type="RNAct" id="Q8N1S5">
    <property type="molecule type" value="protein"/>
</dbReference>
<dbReference type="Bgee" id="ENSG00000133195">
    <property type="expression patterns" value="Expressed in bone marrow cell and 173 other cell types or tissues"/>
</dbReference>
<dbReference type="ExpressionAtlas" id="Q8N1S5">
    <property type="expression patterns" value="baseline and differential"/>
</dbReference>
<dbReference type="GO" id="GO:0005737">
    <property type="term" value="C:cytoplasm"/>
    <property type="evidence" value="ECO:0000250"/>
    <property type="project" value="UniProtKB"/>
</dbReference>
<dbReference type="GO" id="GO:0005794">
    <property type="term" value="C:Golgi apparatus"/>
    <property type="evidence" value="ECO:0000250"/>
    <property type="project" value="UniProtKB"/>
</dbReference>
<dbReference type="GO" id="GO:0016020">
    <property type="term" value="C:membrane"/>
    <property type="evidence" value="ECO:0000318"/>
    <property type="project" value="GO_Central"/>
</dbReference>
<dbReference type="GO" id="GO:0005634">
    <property type="term" value="C:nucleus"/>
    <property type="evidence" value="ECO:0000250"/>
    <property type="project" value="UniProtKB"/>
</dbReference>
<dbReference type="GO" id="GO:0005886">
    <property type="term" value="C:plasma membrane"/>
    <property type="evidence" value="ECO:0000250"/>
    <property type="project" value="UniProtKB"/>
</dbReference>
<dbReference type="GO" id="GO:0005375">
    <property type="term" value="F:copper ion transmembrane transporter activity"/>
    <property type="evidence" value="ECO:0000250"/>
    <property type="project" value="UniProtKB"/>
</dbReference>
<dbReference type="GO" id="GO:0005385">
    <property type="term" value="F:zinc ion transmembrane transporter activity"/>
    <property type="evidence" value="ECO:0000250"/>
    <property type="project" value="UniProtKB"/>
</dbReference>
<dbReference type="GO" id="GO:0071578">
    <property type="term" value="P:zinc ion import across plasma membrane"/>
    <property type="evidence" value="ECO:0007669"/>
    <property type="project" value="Ensembl"/>
</dbReference>
<dbReference type="GO" id="GO:0071577">
    <property type="term" value="P:zinc ion transmembrane transport"/>
    <property type="evidence" value="ECO:0000318"/>
    <property type="project" value="GO_Central"/>
</dbReference>
<dbReference type="InterPro" id="IPR003689">
    <property type="entry name" value="ZIP"/>
</dbReference>
<dbReference type="PANTHER" id="PTHR11040:SF211">
    <property type="entry name" value="ZINC TRANSPORTER ZIP11"/>
    <property type="match status" value="1"/>
</dbReference>
<dbReference type="PANTHER" id="PTHR11040">
    <property type="entry name" value="ZINC/IRON TRANSPORTER"/>
    <property type="match status" value="1"/>
</dbReference>
<dbReference type="Pfam" id="PF02535">
    <property type="entry name" value="Zip"/>
    <property type="match status" value="1"/>
</dbReference>
<accession>Q8N1S5</accession>
<accession>B2R8H7</accession>
<accession>Q8WZ81</accession>
<feature type="chain" id="PRO_0000308410" description="Zinc transporter ZIP11">
    <location>
        <begin position="1"/>
        <end position="342"/>
    </location>
</feature>
<feature type="transmembrane region" description="Helical" evidence="2">
    <location>
        <begin position="12"/>
        <end position="32"/>
    </location>
</feature>
<feature type="transmembrane region" description="Helical" evidence="2">
    <location>
        <begin position="44"/>
        <end position="64"/>
    </location>
</feature>
<feature type="transmembrane region" description="Helical" evidence="2">
    <location>
        <begin position="72"/>
        <end position="92"/>
    </location>
</feature>
<feature type="transmembrane region" description="Helical" evidence="2">
    <location>
        <begin position="194"/>
        <end position="214"/>
    </location>
</feature>
<feature type="transmembrane region" description="Helical" evidence="2">
    <location>
        <begin position="263"/>
        <end position="285"/>
    </location>
</feature>
<feature type="transmembrane region" description="Helical" evidence="2">
    <location>
        <begin position="290"/>
        <end position="307"/>
    </location>
</feature>
<feature type="transmembrane region" description="Helical" evidence="2">
    <location>
        <begin position="322"/>
        <end position="342"/>
    </location>
</feature>
<feature type="splice variant" id="VSP_028976" description="In isoform 2." evidence="7 8 9">
    <location>
        <begin position="144"/>
        <end position="150"/>
    </location>
</feature>
<feature type="sequence variant" id="VAR_036812" description="In dbSNP:rs2466517." evidence="3 4 5 6">
    <original>T</original>
    <variation>A</variation>
    <location>
        <position position="111"/>
    </location>
</feature>
<feature type="sequence conflict" description="In Ref. 2; BAC04504." evidence="10" ref="2">
    <original>A</original>
    <variation>T</variation>
    <location>
        <position position="113"/>
    </location>
</feature>
<keyword id="KW-0025">Alternative splicing</keyword>
<keyword id="KW-1003">Cell membrane</keyword>
<keyword id="KW-0963">Cytoplasm</keyword>
<keyword id="KW-0333">Golgi apparatus</keyword>
<keyword id="KW-0406">Ion transport</keyword>
<keyword id="KW-0472">Membrane</keyword>
<keyword id="KW-0539">Nucleus</keyword>
<keyword id="KW-1267">Proteomics identification</keyword>
<keyword id="KW-1185">Reference proteome</keyword>
<keyword id="KW-0812">Transmembrane</keyword>
<keyword id="KW-1133">Transmembrane helix</keyword>
<keyword id="KW-0813">Transport</keyword>
<keyword id="KW-0862">Zinc</keyword>
<keyword id="KW-0864">Zinc transport</keyword>
<sequence length="342" mass="35396">MLQGHSSVFQALLGTFFTWGMTAAGAALVFVFSSGQRRILDGSLGFAAGVMLAASYWSLLAPAVEMATSSGGFGAFAFFPVAVGFTLGAAFVYLADLLMPHLGAAEDPQTTLALNFGSTLMKKKSDPEGPALLFPESELSIRIGRAGLLSDKSENGEAYQRKKAAATGLPEGPAVPVPSRGNLAQPGGSSWRRIALLILAITIHNVPEGLAVGVGFGAIEKTASATFESARNLAIGIGIQNFPEGLAVSLPLRGAGFSTWRAFWYGQLSGMVEPLAGVFGAFAVVLAEPILPYALAFAAGAMVYVVMDDIIPEAQISGNGKLASWASILGFVVMMSLDVGLG</sequence>
<proteinExistence type="evidence at protein level"/>
<organism>
    <name type="scientific">Homo sapiens</name>
    <name type="common">Human</name>
    <dbReference type="NCBI Taxonomy" id="9606"/>
    <lineage>
        <taxon>Eukaryota</taxon>
        <taxon>Metazoa</taxon>
        <taxon>Chordata</taxon>
        <taxon>Craniata</taxon>
        <taxon>Vertebrata</taxon>
        <taxon>Euteleostomi</taxon>
        <taxon>Mammalia</taxon>
        <taxon>Eutheria</taxon>
        <taxon>Euarchontoglires</taxon>
        <taxon>Primates</taxon>
        <taxon>Haplorrhini</taxon>
        <taxon>Catarrhini</taxon>
        <taxon>Hominidae</taxon>
        <taxon>Homo</taxon>
    </lineage>
</organism>
<comment type="function">
    <text evidence="1">Zinc importer that regulates cytosolic zinc concentrations either via zinc influx from the extracellular compartment or efflux from intracellular organelles such as Golgi apparatus. May transport copper ions as well. The transport mechanism remains to be elucidated.</text>
</comment>
<comment type="catalytic activity">
    <reaction evidence="1">
        <text>Zn(2+)(in) = Zn(2+)(out)</text>
        <dbReference type="Rhea" id="RHEA:29351"/>
        <dbReference type="ChEBI" id="CHEBI:29105"/>
    </reaction>
    <physiologicalReaction direction="right-to-left" evidence="1">
        <dbReference type="Rhea" id="RHEA:29353"/>
    </physiologicalReaction>
</comment>
<comment type="catalytic activity">
    <reaction evidence="1">
        <text>Cu(2+)(in) = Cu(2+)(out)</text>
        <dbReference type="Rhea" id="RHEA:28703"/>
        <dbReference type="ChEBI" id="CHEBI:29036"/>
    </reaction>
    <physiologicalReaction direction="right-to-left" evidence="1">
        <dbReference type="Rhea" id="RHEA:28705"/>
    </physiologicalReaction>
</comment>
<comment type="subcellular location">
    <subcellularLocation>
        <location evidence="1">Cell membrane</location>
        <topology evidence="1">Multi-pass membrane protein</topology>
    </subcellularLocation>
    <subcellularLocation>
        <location evidence="1">Nucleus</location>
    </subcellularLocation>
    <subcellularLocation>
        <location evidence="1">Cytoplasm</location>
    </subcellularLocation>
    <subcellularLocation>
        <location evidence="1">Golgi apparatus</location>
    </subcellularLocation>
</comment>
<comment type="alternative products">
    <event type="alternative splicing"/>
    <isoform>
        <id>Q8N1S5-1</id>
        <name>1</name>
        <sequence type="displayed"/>
    </isoform>
    <isoform>
        <id>Q8N1S5-2</id>
        <name>2</name>
        <sequence type="described" ref="VSP_028976"/>
    </isoform>
</comment>
<comment type="similarity">
    <text evidence="10">Belongs to the ZIP transporter (TC 2.A.5) family.</text>
</comment>
<name>S39AB_HUMAN</name>
<gene>
    <name type="primary">SLC39A11</name>
    <name type="synonym">C17orf26</name>
    <name type="synonym">ZIP11</name>
</gene>
<evidence type="ECO:0000250" key="1">
    <source>
        <dbReference type="UniProtKB" id="Q8BWY7"/>
    </source>
</evidence>
<evidence type="ECO:0000255" key="2"/>
<evidence type="ECO:0000269" key="3">
    <source>
    </source>
</evidence>
<evidence type="ECO:0000269" key="4">
    <source>
    </source>
</evidence>
<evidence type="ECO:0000269" key="5">
    <source>
    </source>
</evidence>
<evidence type="ECO:0000269" key="6">
    <source ref="4"/>
</evidence>
<evidence type="ECO:0000303" key="7">
    <source>
    </source>
</evidence>
<evidence type="ECO:0000303" key="8">
    <source>
    </source>
</evidence>
<evidence type="ECO:0000303" key="9">
    <source>
    </source>
</evidence>
<evidence type="ECO:0000305" key="10"/>
<protein>
    <recommendedName>
        <fullName>Zinc transporter ZIP11</fullName>
    </recommendedName>
    <alternativeName>
        <fullName>Solute carrier family 39 member 11</fullName>
    </alternativeName>
    <alternativeName>
        <fullName>Zrt- and Irt-like protein 11</fullName>
        <shortName>ZIP-11</shortName>
    </alternativeName>
</protein>